<reference key="1">
    <citation type="journal article" date="2005" name="J. Bacteriol.">
        <title>The activity profile of the NhaD-type Na+(Li+)/H+ antiporter from the soda lake haloalkaliphile Alkalimonas amylolytica is adaptive for the extreme environment.</title>
        <authorList>
            <person name="Liu J."/>
            <person name="Xue Y."/>
            <person name="Wang Q."/>
            <person name="Wei Y."/>
            <person name="Swartz T.H."/>
            <person name="Hicks D.B."/>
            <person name="Ito M."/>
            <person name="Ma Y."/>
            <person name="Krulwich T.A."/>
        </authorList>
    </citation>
    <scope>NUCLEOTIDE SEQUENCE [GENOMIC DNA]</scope>
    <scope>FUNCTION</scope>
    <scope>BIOPHYSICOCHEMICAL PROPERTIES</scope>
    <scope>SUBCELLULAR LOCATION</scope>
    <scope>MUTAGENESIS OF GLY-330</scope>
</reference>
<gene>
    <name type="primary">nhaD</name>
</gene>
<keyword id="KW-0050">Antiport</keyword>
<keyword id="KW-0997">Cell inner membrane</keyword>
<keyword id="KW-1003">Cell membrane</keyword>
<keyword id="KW-0406">Ion transport</keyword>
<keyword id="KW-0472">Membrane</keyword>
<keyword id="KW-0915">Sodium</keyword>
<keyword id="KW-0739">Sodium transport</keyword>
<keyword id="KW-0812">Transmembrane</keyword>
<keyword id="KW-1133">Transmembrane helix</keyword>
<keyword id="KW-0813">Transport</keyword>
<sequence length="483" mass="53445">MQSLRCVSWLAGLLCLLFSTPVFAASAAPLDLTSSLVGFVCIAIFVVAYVLVMGEEKLHMRKSKPVLVAAGLIWILIGWVYISRDIPDVTEAAFRHNLLEFAELMLFLLVAMTYINALEERRLFDALRAWMIRKGFSYQNLFWITGFLSFFISPIADNLTTALLMCAVVMKVAEGDKRFINLCCVNIVIAANAGGAFSPFGDITTLMVWQAGLVRIDEFLVLFFPALVNYLIPAAVMSFFVEKRQPSAVYEDVELKRGALRILTLFLLTVATAVLCHSLLHLPPVLGMMMGLGYLQFFGYFLRMTLPGSLARKRAMAEREGDQEKLKRLGGVVPFDVFSRVSRAEWDTLLFFYGIVMCVGGLGFLGYLGLMSDLLYEGWNPTSANILLGVISAVIDNIPVMFAVLAMQPEMSHGHWLLITLTAGVGGSLLSIGSAAGVALMGQARGYYTFFGHLKWAPVIFIGYIASIAVHLWLNADLFHIYD</sequence>
<organism>
    <name type="scientific">Alkalimonas amylolytica</name>
    <dbReference type="NCBI Taxonomy" id="152573"/>
    <lineage>
        <taxon>Bacteria</taxon>
        <taxon>Pseudomonadati</taxon>
        <taxon>Pseudomonadota</taxon>
        <taxon>Gammaproteobacteria</taxon>
        <taxon>Alkalimonas</taxon>
    </lineage>
</organism>
<dbReference type="EMBL" id="AY962404">
    <property type="protein sequence ID" value="AAX63482.1"/>
    <property type="molecule type" value="Genomic_DNA"/>
</dbReference>
<dbReference type="RefSeq" id="WP_091339707.1">
    <property type="nucleotide sequence ID" value="NZ_FNRM01000002.1"/>
</dbReference>
<dbReference type="SMR" id="Q56EB3"/>
<dbReference type="STRING" id="152573.SAMN04488051_10234"/>
<dbReference type="TCDB" id="2.A.62.1.2">
    <property type="family name" value="the nhad na(+):h(+) antiporter (nhad) family"/>
</dbReference>
<dbReference type="OrthoDB" id="9772058at2"/>
<dbReference type="GO" id="GO:0005886">
    <property type="term" value="C:plasma membrane"/>
    <property type="evidence" value="ECO:0007669"/>
    <property type="project" value="UniProtKB-SubCell"/>
</dbReference>
<dbReference type="GO" id="GO:0015297">
    <property type="term" value="F:antiporter activity"/>
    <property type="evidence" value="ECO:0007669"/>
    <property type="project" value="UniProtKB-KW"/>
</dbReference>
<dbReference type="GO" id="GO:0006814">
    <property type="term" value="P:sodium ion transport"/>
    <property type="evidence" value="ECO:0007669"/>
    <property type="project" value="UniProtKB-KW"/>
</dbReference>
<dbReference type="InterPro" id="IPR004680">
    <property type="entry name" value="Cit_transptr-like_dom"/>
</dbReference>
<dbReference type="InterPro" id="IPR045016">
    <property type="entry name" value="NhaD-like"/>
</dbReference>
<dbReference type="NCBIfam" id="NF038006">
    <property type="entry name" value="NhaD_1"/>
    <property type="match status" value="1"/>
</dbReference>
<dbReference type="PANTHER" id="PTHR43269">
    <property type="entry name" value="SODIUM/PROTON ANTIPORTER 1-RELATED"/>
    <property type="match status" value="1"/>
</dbReference>
<dbReference type="PANTHER" id="PTHR43269:SF2">
    <property type="entry name" value="SODIUM_PROTON ANTIPORTER 1-RELATED"/>
    <property type="match status" value="1"/>
</dbReference>
<dbReference type="Pfam" id="PF03600">
    <property type="entry name" value="CitMHS"/>
    <property type="match status" value="1"/>
</dbReference>
<accession>Q56EB3</accession>
<name>NHAD_ALKAM</name>
<feature type="chain" id="PRO_0000423659" description="Na(+)/H(+) antiporter NhaD">
    <location>
        <begin position="1"/>
        <end position="483"/>
    </location>
</feature>
<feature type="transmembrane region" description="Helical" evidence="1">
    <location>
        <begin position="10"/>
        <end position="30"/>
    </location>
</feature>
<feature type="transmembrane region" description="Helical" evidence="1">
    <location>
        <begin position="34"/>
        <end position="54"/>
    </location>
</feature>
<feature type="transmembrane region" description="Helical" evidence="1">
    <location>
        <begin position="63"/>
        <end position="83"/>
    </location>
</feature>
<feature type="transmembrane region" description="Helical" evidence="1">
    <location>
        <begin position="98"/>
        <end position="118"/>
    </location>
</feature>
<feature type="transmembrane region" description="Helical" evidence="1">
    <location>
        <begin position="136"/>
        <end position="156"/>
    </location>
</feature>
<feature type="transmembrane region" description="Helical" evidence="1">
    <location>
        <begin position="221"/>
        <end position="241"/>
    </location>
</feature>
<feature type="transmembrane region" description="Helical" evidence="1">
    <location>
        <begin position="260"/>
        <end position="280"/>
    </location>
</feature>
<feature type="transmembrane region" description="Helical" evidence="1">
    <location>
        <begin position="282"/>
        <end position="302"/>
    </location>
</feature>
<feature type="transmembrane region" description="Helical" evidence="1">
    <location>
        <begin position="349"/>
        <end position="369"/>
    </location>
</feature>
<feature type="transmembrane region" description="Helical" evidence="1">
    <location>
        <begin position="386"/>
        <end position="406"/>
    </location>
</feature>
<feature type="transmembrane region" description="Helical" evidence="1">
    <location>
        <begin position="416"/>
        <end position="436"/>
    </location>
</feature>
<feature type="transmembrane region" description="Helical" evidence="1">
    <location>
        <begin position="456"/>
        <end position="476"/>
    </location>
</feature>
<feature type="mutagenesis site" description="Shows an altered activity profile in both pH and substrate concentration." evidence="2">
    <original>G</original>
    <variation>S</variation>
    <location>
        <position position="330"/>
    </location>
</feature>
<protein>
    <recommendedName>
        <fullName>Na(+)/H(+) antiporter NhaD</fullName>
    </recommendedName>
    <alternativeName>
        <fullName>Sodium/proton antiporter NhaD</fullName>
    </alternativeName>
</protein>
<proteinExistence type="evidence at protein level"/>
<evidence type="ECO:0000255" key="1"/>
<evidence type="ECO:0000269" key="2">
    <source>
    </source>
</evidence>
<evidence type="ECO:0000305" key="3"/>
<comment type="function">
    <text evidence="2">Na(+)/H(+) antiporter that extrudes sodium in exchange for external protons. Can also transport lithium. Has a low antiport activity that functions over a large range of sodium concentrations.</text>
</comment>
<comment type="biophysicochemical properties">
    <phDependence>
        <text evidence="2">Optimum pH is at least 9.5, the highest pH value tested. No activity is observed below pH 8.5.</text>
    </phDependence>
</comment>
<comment type="subcellular location">
    <subcellularLocation>
        <location evidence="2">Cell inner membrane</location>
        <topology evidence="2">Multi-pass membrane protein</topology>
    </subcellularLocation>
</comment>
<comment type="similarity">
    <text evidence="3">Belongs to the NhaD Na(+)/H(+) (TC 2.A.62) antiporter family.</text>
</comment>